<comment type="subunit">
    <text evidence="7">Heterodimer with B2M.</text>
</comment>
<comment type="subcellular location">
    <subcellularLocation>
        <location evidence="7">Cell membrane</location>
        <topology evidence="7">Lipid-anchor</topology>
        <topology evidence="7">GPI-anchor</topology>
    </subcellularLocation>
</comment>
<comment type="tissue specificity">
    <text evidence="6">Expressed in stomach, intestine, uterus, skeletal muscle and heart.</text>
</comment>
<comment type="developmental stage">
    <text evidence="6 7">In neonatal animals, highly expressed in skin where it localizes to a region of the inner root sheath of hair follicles (at protein level) (PubMed:12370446, PubMed:16920948). Also expressed in thymic medullary epithelial cells (at protein level) (PubMed:12370446, PubMed:16920948). Detected in skeletal muscle, eyes, and submandibular glands (PubMed:12370446).</text>
</comment>
<comment type="PTM">
    <text evidence="7">N-glycosylated.</text>
</comment>
<comment type="similarity">
    <text evidence="4">Belongs to the MHC class I family.</text>
</comment>
<comment type="caution">
    <text evidence="10 11">Lacks key residues involved in peptide docking and also does not require TAP (transporter involved in antigen processing) for cell surface expression, suggesting that this is a non-classical MHC class I protein which does not play a role in antigen presentation.</text>
</comment>
<accession>Q8HWE7</accession>
<accession>Q8HWA4</accession>
<accession>Q8HWA5</accession>
<sequence length="395" mass="44745">MLLSRNLRALAAIHLWIVYLLLEDLLGTCAEGDNQRLVASAPYQDIEITLEKPRVQAVAEPHTLRYDLMALSLEVPGLPQFLTLRYFDDEPFLPYKKNSSITDSQEPRIKDHLRAETWGRETDDLQEEEEQLKGMLAEITAQNGQNTDLHILQATFGCELQRNGSTRGFWKLGYDGQNFLTFDQKTLTWTVDGPSTQKNKTFWKTRAPRADLVKTFLDDICPAQLQRYLASLRNGLLNTGFPKVIVTFRNYPVGRITLTCRAFRLYTRVATLTWLQYRKPVQQKTFGSETILPSGDGTYQAWVSIRVLPGQESQFSCNLKHGNHNINEPAATEAPVYGARREQPPTSGVGSRVGKSLWSAMTTALVVISWTLSQKLMGPLLWFCSGGFCSFLQCW</sequence>
<evidence type="ECO:0000250" key="1">
    <source>
        <dbReference type="UniProtKB" id="Q8HWE5"/>
    </source>
</evidence>
<evidence type="ECO:0000255" key="2"/>
<evidence type="ECO:0000255" key="3">
    <source>
        <dbReference type="PROSITE-ProRule" id="PRU00114"/>
    </source>
</evidence>
<evidence type="ECO:0000255" key="4">
    <source>
        <dbReference type="RuleBase" id="RU004439"/>
    </source>
</evidence>
<evidence type="ECO:0000256" key="5">
    <source>
        <dbReference type="SAM" id="MobiDB-lite"/>
    </source>
</evidence>
<evidence type="ECO:0000269" key="6">
    <source>
    </source>
</evidence>
<evidence type="ECO:0000269" key="7">
    <source>
    </source>
</evidence>
<evidence type="ECO:0000303" key="8">
    <source>
    </source>
</evidence>
<evidence type="ECO:0000305" key="9"/>
<evidence type="ECO:0000305" key="10">
    <source>
    </source>
</evidence>
<evidence type="ECO:0000305" key="11">
    <source>
    </source>
</evidence>
<evidence type="ECO:0000312" key="12">
    <source>
        <dbReference type="EMBL" id="AAI10548.1"/>
    </source>
</evidence>
<evidence type="ECO:0000312" key="13">
    <source>
        <dbReference type="EMBL" id="BAC21669.1"/>
    </source>
</evidence>
<evidence type="ECO:0000312" key="14">
    <source>
        <dbReference type="EMBL" id="BAC26240.1"/>
    </source>
</evidence>
<evidence type="ECO:0000312" key="15">
    <source>
        <dbReference type="Proteomes" id="UP000000589"/>
    </source>
</evidence>
<feature type="signal peptide" evidence="2">
    <location>
        <begin position="1"/>
        <end position="32"/>
    </location>
</feature>
<feature type="chain" id="PRO_5015099152" description="MHC class I-like protein MILL1" evidence="2">
    <location>
        <begin position="33"/>
        <end position="369"/>
    </location>
</feature>
<feature type="propeptide" id="PRO_0000452205" description="Removed in mature form" evidence="11">
    <location>
        <begin position="370"/>
        <end position="395"/>
    </location>
</feature>
<feature type="domain" description="Ig-like C1-type" evidence="3">
    <location>
        <begin position="242"/>
        <end position="333"/>
    </location>
</feature>
<feature type="region of interest" description="Alpha-1" evidence="2">
    <location>
        <begin position="57"/>
        <end position="148"/>
    </location>
</feature>
<feature type="region of interest" description="Alpha-2" evidence="2">
    <location>
        <begin position="149"/>
        <end position="240"/>
    </location>
</feature>
<feature type="region of interest" description="Alpha-3" evidence="2">
    <location>
        <begin position="241"/>
        <end position="337"/>
    </location>
</feature>
<feature type="region of interest" description="Disordered" evidence="5">
    <location>
        <begin position="332"/>
        <end position="352"/>
    </location>
</feature>
<feature type="region of interest" description="Connecting peptide" evidence="2">
    <location>
        <begin position="338"/>
        <end position="368"/>
    </location>
</feature>
<feature type="lipid moiety-binding region" description="GPI-anchor amidated serine" evidence="11">
    <location>
        <position position="369"/>
    </location>
</feature>
<feature type="glycosylation site" description="N-linked (GlcNAc...) asparagine" evidence="2">
    <location>
        <position position="98"/>
    </location>
</feature>
<feature type="glycosylation site" description="N-linked (GlcNAc...) asparagine" evidence="2">
    <location>
        <position position="163"/>
    </location>
</feature>
<feature type="glycosylation site" description="N-linked (GlcNAc...) asparagine" evidence="2">
    <location>
        <position position="199"/>
    </location>
</feature>
<feature type="disulfide bond" evidence="1">
    <location>
        <begin position="158"/>
        <end position="221"/>
    </location>
</feature>
<feature type="disulfide bond" evidence="3">
    <location>
        <begin position="260"/>
        <end position="317"/>
    </location>
</feature>
<feature type="sequence conflict" description="In Ref. 2; BAC27084." evidence="9" ref="2">
    <original>V</original>
    <variation>L</variation>
    <location>
        <position position="58"/>
    </location>
</feature>
<feature type="sequence conflict" description="In Ref. 2; BAC27084." evidence="9" ref="2">
    <original>F</original>
    <variation>L</variation>
    <location>
        <position position="202"/>
    </location>
</feature>
<feature type="sequence conflict" description="In Ref. 2; BAC27084." evidence="9" ref="2">
    <original>T</original>
    <variation>A</variation>
    <location>
        <position position="215"/>
    </location>
</feature>
<feature type="sequence conflict" description="In Ref. 2; BAC26240." evidence="9" ref="2">
    <original>M</original>
    <variation>L</variation>
    <location>
        <position position="377"/>
    </location>
</feature>
<reference evidence="13" key="1">
    <citation type="journal article" date="2002" name="Proc. Natl. Acad. Sci. U.S.A.">
        <title>A family of MHC class I-like genes located in the vicinity of the mouse leukocyte receptor complex.</title>
        <authorList>
            <person name="Kasahara M."/>
            <person name="Watanabe Y."/>
            <person name="Sumasu M."/>
            <person name="Nagata T."/>
        </authorList>
    </citation>
    <scope>NUCLEOTIDE SEQUENCE [MRNA]</scope>
    <scope>TISSUE SPECIFICITY</scope>
    <scope>DEVELOPMENTAL STAGE</scope>
    <source>
        <strain evidence="13">BALB/cJ</strain>
        <tissue evidence="13">Skin</tissue>
    </source>
</reference>
<reference evidence="14" key="2">
    <citation type="journal article" date="2005" name="Science">
        <title>The transcriptional landscape of the mammalian genome.</title>
        <authorList>
            <person name="Carninci P."/>
            <person name="Kasukawa T."/>
            <person name="Katayama S."/>
            <person name="Gough J."/>
            <person name="Frith M.C."/>
            <person name="Maeda N."/>
            <person name="Oyama R."/>
            <person name="Ravasi T."/>
            <person name="Lenhard B."/>
            <person name="Wells C."/>
            <person name="Kodzius R."/>
            <person name="Shimokawa K."/>
            <person name="Bajic V.B."/>
            <person name="Brenner S.E."/>
            <person name="Batalov S."/>
            <person name="Forrest A.R."/>
            <person name="Zavolan M."/>
            <person name="Davis M.J."/>
            <person name="Wilming L.G."/>
            <person name="Aidinis V."/>
            <person name="Allen J.E."/>
            <person name="Ambesi-Impiombato A."/>
            <person name="Apweiler R."/>
            <person name="Aturaliya R.N."/>
            <person name="Bailey T.L."/>
            <person name="Bansal M."/>
            <person name="Baxter L."/>
            <person name="Beisel K.W."/>
            <person name="Bersano T."/>
            <person name="Bono H."/>
            <person name="Chalk A.M."/>
            <person name="Chiu K.P."/>
            <person name="Choudhary V."/>
            <person name="Christoffels A."/>
            <person name="Clutterbuck D.R."/>
            <person name="Crowe M.L."/>
            <person name="Dalla E."/>
            <person name="Dalrymple B.P."/>
            <person name="de Bono B."/>
            <person name="Della Gatta G."/>
            <person name="di Bernardo D."/>
            <person name="Down T."/>
            <person name="Engstrom P."/>
            <person name="Fagiolini M."/>
            <person name="Faulkner G."/>
            <person name="Fletcher C.F."/>
            <person name="Fukushima T."/>
            <person name="Furuno M."/>
            <person name="Futaki S."/>
            <person name="Gariboldi M."/>
            <person name="Georgii-Hemming P."/>
            <person name="Gingeras T.R."/>
            <person name="Gojobori T."/>
            <person name="Green R.E."/>
            <person name="Gustincich S."/>
            <person name="Harbers M."/>
            <person name="Hayashi Y."/>
            <person name="Hensch T.K."/>
            <person name="Hirokawa N."/>
            <person name="Hill D."/>
            <person name="Huminiecki L."/>
            <person name="Iacono M."/>
            <person name="Ikeo K."/>
            <person name="Iwama A."/>
            <person name="Ishikawa T."/>
            <person name="Jakt M."/>
            <person name="Kanapin A."/>
            <person name="Katoh M."/>
            <person name="Kawasawa Y."/>
            <person name="Kelso J."/>
            <person name="Kitamura H."/>
            <person name="Kitano H."/>
            <person name="Kollias G."/>
            <person name="Krishnan S.P."/>
            <person name="Kruger A."/>
            <person name="Kummerfeld S.K."/>
            <person name="Kurochkin I.V."/>
            <person name="Lareau L.F."/>
            <person name="Lazarevic D."/>
            <person name="Lipovich L."/>
            <person name="Liu J."/>
            <person name="Liuni S."/>
            <person name="McWilliam S."/>
            <person name="Madan Babu M."/>
            <person name="Madera M."/>
            <person name="Marchionni L."/>
            <person name="Matsuda H."/>
            <person name="Matsuzawa S."/>
            <person name="Miki H."/>
            <person name="Mignone F."/>
            <person name="Miyake S."/>
            <person name="Morris K."/>
            <person name="Mottagui-Tabar S."/>
            <person name="Mulder N."/>
            <person name="Nakano N."/>
            <person name="Nakauchi H."/>
            <person name="Ng P."/>
            <person name="Nilsson R."/>
            <person name="Nishiguchi S."/>
            <person name="Nishikawa S."/>
            <person name="Nori F."/>
            <person name="Ohara O."/>
            <person name="Okazaki Y."/>
            <person name="Orlando V."/>
            <person name="Pang K.C."/>
            <person name="Pavan W.J."/>
            <person name="Pavesi G."/>
            <person name="Pesole G."/>
            <person name="Petrovsky N."/>
            <person name="Piazza S."/>
            <person name="Reed J."/>
            <person name="Reid J.F."/>
            <person name="Ring B.Z."/>
            <person name="Ringwald M."/>
            <person name="Rost B."/>
            <person name="Ruan Y."/>
            <person name="Salzberg S.L."/>
            <person name="Sandelin A."/>
            <person name="Schneider C."/>
            <person name="Schoenbach C."/>
            <person name="Sekiguchi K."/>
            <person name="Semple C.A."/>
            <person name="Seno S."/>
            <person name="Sessa L."/>
            <person name="Sheng Y."/>
            <person name="Shibata Y."/>
            <person name="Shimada H."/>
            <person name="Shimada K."/>
            <person name="Silva D."/>
            <person name="Sinclair B."/>
            <person name="Sperling S."/>
            <person name="Stupka E."/>
            <person name="Sugiura K."/>
            <person name="Sultana R."/>
            <person name="Takenaka Y."/>
            <person name="Taki K."/>
            <person name="Tammoja K."/>
            <person name="Tan S.L."/>
            <person name="Tang S."/>
            <person name="Taylor M.S."/>
            <person name="Tegner J."/>
            <person name="Teichmann S.A."/>
            <person name="Ueda H.R."/>
            <person name="van Nimwegen E."/>
            <person name="Verardo R."/>
            <person name="Wei C.L."/>
            <person name="Yagi K."/>
            <person name="Yamanishi H."/>
            <person name="Zabarovsky E."/>
            <person name="Zhu S."/>
            <person name="Zimmer A."/>
            <person name="Hide W."/>
            <person name="Bult C."/>
            <person name="Grimmond S.M."/>
            <person name="Teasdale R.D."/>
            <person name="Liu E.T."/>
            <person name="Brusic V."/>
            <person name="Quackenbush J."/>
            <person name="Wahlestedt C."/>
            <person name="Mattick J.S."/>
            <person name="Hume D.A."/>
            <person name="Kai C."/>
            <person name="Sasaki D."/>
            <person name="Tomaru Y."/>
            <person name="Fukuda S."/>
            <person name="Kanamori-Katayama M."/>
            <person name="Suzuki M."/>
            <person name="Aoki J."/>
            <person name="Arakawa T."/>
            <person name="Iida J."/>
            <person name="Imamura K."/>
            <person name="Itoh M."/>
            <person name="Kato T."/>
            <person name="Kawaji H."/>
            <person name="Kawagashira N."/>
            <person name="Kawashima T."/>
            <person name="Kojima M."/>
            <person name="Kondo S."/>
            <person name="Konno H."/>
            <person name="Nakano K."/>
            <person name="Ninomiya N."/>
            <person name="Nishio T."/>
            <person name="Okada M."/>
            <person name="Plessy C."/>
            <person name="Shibata K."/>
            <person name="Shiraki T."/>
            <person name="Suzuki S."/>
            <person name="Tagami M."/>
            <person name="Waki K."/>
            <person name="Watahiki A."/>
            <person name="Okamura-Oho Y."/>
            <person name="Suzuki H."/>
            <person name="Kawai J."/>
            <person name="Hayashizaki Y."/>
        </authorList>
    </citation>
    <scope>NUCLEOTIDE SEQUENCE [LARGE SCALE MRNA]</scope>
    <source>
        <strain evidence="14">C57BL/6J</strain>
        <tissue evidence="14">Skin</tissue>
    </source>
</reference>
<reference evidence="15" key="3">
    <citation type="journal article" date="2009" name="PLoS Biol.">
        <title>Lineage-specific biology revealed by a finished genome assembly of the mouse.</title>
        <authorList>
            <person name="Church D.M."/>
            <person name="Goodstadt L."/>
            <person name="Hillier L.W."/>
            <person name="Zody M.C."/>
            <person name="Goldstein S."/>
            <person name="She X."/>
            <person name="Bult C.J."/>
            <person name="Agarwala R."/>
            <person name="Cherry J.L."/>
            <person name="DiCuccio M."/>
            <person name="Hlavina W."/>
            <person name="Kapustin Y."/>
            <person name="Meric P."/>
            <person name="Maglott D."/>
            <person name="Birtle Z."/>
            <person name="Marques A.C."/>
            <person name="Graves T."/>
            <person name="Zhou S."/>
            <person name="Teague B."/>
            <person name="Potamousis K."/>
            <person name="Churas C."/>
            <person name="Place M."/>
            <person name="Herschleb J."/>
            <person name="Runnheim R."/>
            <person name="Forrest D."/>
            <person name="Amos-Landgraf J."/>
            <person name="Schwartz D.C."/>
            <person name="Cheng Z."/>
            <person name="Lindblad-Toh K."/>
            <person name="Eichler E.E."/>
            <person name="Ponting C.P."/>
        </authorList>
    </citation>
    <scope>NUCLEOTIDE SEQUENCE [LARGE SCALE GENOMIC DNA]</scope>
    <source>
        <strain evidence="15">C57BL/6J</strain>
    </source>
</reference>
<reference evidence="12" key="4">
    <citation type="journal article" date="2004" name="Genome Res.">
        <title>The status, quality, and expansion of the NIH full-length cDNA project: the Mammalian Gene Collection (MGC).</title>
        <authorList>
            <consortium name="The MGC Project Team"/>
        </authorList>
    </citation>
    <scope>NUCLEOTIDE SEQUENCE [LARGE SCALE MRNA]</scope>
</reference>
<reference evidence="9" key="5">
    <citation type="journal article" date="2006" name="J. Immunol.">
        <title>MHC class I-like MILL molecules are beta2-microglobulin-associated, GPI-anchored glycoproteins that do not require TAP for cell surface expression.</title>
        <authorList>
            <person name="Kajikawa M."/>
            <person name="Baba T."/>
            <person name="Tomaru U."/>
            <person name="Watanabe Y."/>
            <person name="Koganei S."/>
            <person name="Tsuji-Kawahara S."/>
            <person name="Matsumoto N."/>
            <person name="Yamamoto K."/>
            <person name="Miyazawa M."/>
            <person name="Maenaka K."/>
            <person name="Ishizu A."/>
            <person name="Kasahara M."/>
        </authorList>
    </citation>
    <scope>SUBUNIT</scope>
    <scope>INTERACTION WITH B2M</scope>
    <scope>SUBCELLULAR LOCATION</scope>
    <scope>DEVELOPMENTAL STAGE</scope>
    <scope>GLYCOSYLATION</scope>
    <scope>GPI-ANCHOR AT SER-369</scope>
</reference>
<name>MILL1_MOUSE</name>
<dbReference type="EMBL" id="AK029010">
    <property type="protein sequence ID" value="BAC26240.1"/>
    <property type="molecule type" value="mRNA"/>
</dbReference>
<dbReference type="EMBL" id="AK030695">
    <property type="protein sequence ID" value="BAC27084.1"/>
    <property type="molecule type" value="mRNA"/>
</dbReference>
<dbReference type="EMBL" id="AC151983">
    <property type="status" value="NOT_ANNOTATED_CDS"/>
    <property type="molecule type" value="Genomic_DNA"/>
</dbReference>
<dbReference type="EMBL" id="BC110547">
    <property type="protein sequence ID" value="AAI10548.1"/>
    <property type="molecule type" value="mRNA"/>
</dbReference>
<dbReference type="EMBL" id="BC110548">
    <property type="protein sequence ID" value="AAI10549.1"/>
    <property type="molecule type" value="mRNA"/>
</dbReference>
<dbReference type="EMBL" id="AB086265">
    <property type="protein sequence ID" value="BAC21669.1"/>
    <property type="molecule type" value="mRNA"/>
</dbReference>
<dbReference type="CCDS" id="CCDS20868.1"/>
<dbReference type="RefSeq" id="NP_715630.3">
    <property type="nucleotide sequence ID" value="NM_153749.4"/>
</dbReference>
<dbReference type="SMR" id="Q8HWE7"/>
<dbReference type="FunCoup" id="Q8HWE7">
    <property type="interactions" value="7"/>
</dbReference>
<dbReference type="STRING" id="10090.ENSMUSP00000069083"/>
<dbReference type="GlyCosmos" id="Q8HWE7">
    <property type="glycosylation" value="3 sites, No reported glycans"/>
</dbReference>
<dbReference type="GlyGen" id="Q8HWE7">
    <property type="glycosylation" value="3 sites"/>
</dbReference>
<dbReference type="PaxDb" id="10090-ENSMUSP00000069083"/>
<dbReference type="ProteomicsDB" id="328731"/>
<dbReference type="DNASU" id="266815"/>
<dbReference type="Ensembl" id="ENSMUST00000066780.5">
    <property type="protein sequence ID" value="ENSMUSP00000069083.5"/>
    <property type="gene ID" value="ENSMUSG00000054005.5"/>
</dbReference>
<dbReference type="GeneID" id="266815"/>
<dbReference type="KEGG" id="mmu:266815"/>
<dbReference type="UCSC" id="uc009fjh.1">
    <property type="organism name" value="mouse"/>
</dbReference>
<dbReference type="AGR" id="MGI:2179988"/>
<dbReference type="CTD" id="266815"/>
<dbReference type="MGI" id="MGI:2179988">
    <property type="gene designation" value="Mill1"/>
</dbReference>
<dbReference type="VEuPathDB" id="HostDB:ENSMUSG00000054005"/>
<dbReference type="eggNOG" id="ENOG502RU00">
    <property type="taxonomic scope" value="Eukaryota"/>
</dbReference>
<dbReference type="GeneTree" id="ENSGT01130000278293"/>
<dbReference type="HOGENOM" id="CLU_047501_4_0_1"/>
<dbReference type="InParanoid" id="Q8HWE7"/>
<dbReference type="OMA" id="NHNINEP"/>
<dbReference type="OrthoDB" id="9449998at2759"/>
<dbReference type="PhylomeDB" id="Q8HWE7"/>
<dbReference type="TreeFam" id="TF339076"/>
<dbReference type="BioGRID-ORCS" id="266815">
    <property type="hits" value="1 hit in 79 CRISPR screens"/>
</dbReference>
<dbReference type="PRO" id="PR:Q8HWE7"/>
<dbReference type="Proteomes" id="UP000000589">
    <property type="component" value="Chromosome 7"/>
</dbReference>
<dbReference type="RNAct" id="Q8HWE7">
    <property type="molecule type" value="protein"/>
</dbReference>
<dbReference type="Bgee" id="ENSMUSG00000054005">
    <property type="expression patterns" value="Expressed in zone of skin and 7 other cell types or tissues"/>
</dbReference>
<dbReference type="GO" id="GO:0009897">
    <property type="term" value="C:external side of plasma membrane"/>
    <property type="evidence" value="ECO:0000314"/>
    <property type="project" value="MGI"/>
</dbReference>
<dbReference type="FunFam" id="3.30.500.10:FF:000003">
    <property type="entry name" value="IgG receptor FcRn large subunit p51"/>
    <property type="match status" value="1"/>
</dbReference>
<dbReference type="FunFam" id="2.60.40.10:FF:000204">
    <property type="entry name" value="Major histocompatibility complex, class I-related protein"/>
    <property type="match status" value="1"/>
</dbReference>
<dbReference type="Gene3D" id="2.60.40.10">
    <property type="entry name" value="Immunoglobulins"/>
    <property type="match status" value="1"/>
</dbReference>
<dbReference type="Gene3D" id="3.30.500.10">
    <property type="entry name" value="MHC class I-like antigen recognition-like"/>
    <property type="match status" value="1"/>
</dbReference>
<dbReference type="InterPro" id="IPR007110">
    <property type="entry name" value="Ig-like_dom"/>
</dbReference>
<dbReference type="InterPro" id="IPR036179">
    <property type="entry name" value="Ig-like_dom_sf"/>
</dbReference>
<dbReference type="InterPro" id="IPR013783">
    <property type="entry name" value="Ig-like_fold"/>
</dbReference>
<dbReference type="InterPro" id="IPR003597">
    <property type="entry name" value="Ig_C1-set"/>
</dbReference>
<dbReference type="InterPro" id="IPR050208">
    <property type="entry name" value="MHC_class-I_related"/>
</dbReference>
<dbReference type="InterPro" id="IPR011161">
    <property type="entry name" value="MHC_I-like_Ag-recog"/>
</dbReference>
<dbReference type="InterPro" id="IPR037055">
    <property type="entry name" value="MHC_I-like_Ag-recog_sf"/>
</dbReference>
<dbReference type="InterPro" id="IPR011162">
    <property type="entry name" value="MHC_I/II-like_Ag-recog"/>
</dbReference>
<dbReference type="InterPro" id="IPR001039">
    <property type="entry name" value="MHC_I_a_a1/a2"/>
</dbReference>
<dbReference type="PANTHER" id="PTHR16675:SF139">
    <property type="entry name" value="MHC CLASS I-LIKE PROTEIN MILL1"/>
    <property type="match status" value="1"/>
</dbReference>
<dbReference type="PANTHER" id="PTHR16675">
    <property type="entry name" value="MHC CLASS I-RELATED"/>
    <property type="match status" value="1"/>
</dbReference>
<dbReference type="Pfam" id="PF07654">
    <property type="entry name" value="C1-set"/>
    <property type="match status" value="1"/>
</dbReference>
<dbReference type="Pfam" id="PF00129">
    <property type="entry name" value="MHC_I"/>
    <property type="match status" value="1"/>
</dbReference>
<dbReference type="PRINTS" id="PR01638">
    <property type="entry name" value="MHCCLASSI"/>
</dbReference>
<dbReference type="SMART" id="SM00407">
    <property type="entry name" value="IGc1"/>
    <property type="match status" value="1"/>
</dbReference>
<dbReference type="SUPFAM" id="SSF48726">
    <property type="entry name" value="Immunoglobulin"/>
    <property type="match status" value="1"/>
</dbReference>
<dbReference type="SUPFAM" id="SSF54452">
    <property type="entry name" value="MHC antigen-recognition domain"/>
    <property type="match status" value="1"/>
</dbReference>
<dbReference type="PROSITE" id="PS50835">
    <property type="entry name" value="IG_LIKE"/>
    <property type="match status" value="1"/>
</dbReference>
<organism evidence="15">
    <name type="scientific">Mus musculus</name>
    <name type="common">Mouse</name>
    <dbReference type="NCBI Taxonomy" id="10090"/>
    <lineage>
        <taxon>Eukaryota</taxon>
        <taxon>Metazoa</taxon>
        <taxon>Chordata</taxon>
        <taxon>Craniata</taxon>
        <taxon>Vertebrata</taxon>
        <taxon>Euteleostomi</taxon>
        <taxon>Mammalia</taxon>
        <taxon>Eutheria</taxon>
        <taxon>Euarchontoglires</taxon>
        <taxon>Glires</taxon>
        <taxon>Rodentia</taxon>
        <taxon>Myomorpha</taxon>
        <taxon>Muroidea</taxon>
        <taxon>Muridae</taxon>
        <taxon>Murinae</taxon>
        <taxon>Mus</taxon>
        <taxon>Mus</taxon>
    </lineage>
</organism>
<proteinExistence type="evidence at protein level"/>
<keyword id="KW-1003">Cell membrane</keyword>
<keyword id="KW-1015">Disulfide bond</keyword>
<keyword id="KW-0325">Glycoprotein</keyword>
<keyword id="KW-0336">GPI-anchor</keyword>
<keyword id="KW-0449">Lipoprotein</keyword>
<keyword id="KW-0472">Membrane</keyword>
<keyword id="KW-1185">Reference proteome</keyword>
<keyword id="KW-0732">Signal</keyword>
<protein>
    <recommendedName>
        <fullName evidence="9">MHC class I-like protein MILL1</fullName>
    </recommendedName>
    <alternativeName>
        <fullName evidence="8">MHC class I-like located near the leukocyte receptor complex 1</fullName>
    </alternativeName>
</protein>
<gene>
    <name evidence="8" type="primary">Mill1</name>
</gene>